<dbReference type="EC" id="2.4.1.222" evidence="7 12"/>
<dbReference type="EMBL" id="U94351">
    <property type="protein sequence ID" value="AAC53262.1"/>
    <property type="molecule type" value="mRNA"/>
</dbReference>
<dbReference type="EMBL" id="AF015768">
    <property type="protein sequence ID" value="AAB71668.1"/>
    <property type="molecule type" value="mRNA"/>
</dbReference>
<dbReference type="EMBL" id="AY124581">
    <property type="protein sequence ID" value="AAM93541.1"/>
    <property type="molecule type" value="Genomic_DNA"/>
</dbReference>
<dbReference type="EMBL" id="AK004642">
    <property type="status" value="NOT_ANNOTATED_CDS"/>
    <property type="molecule type" value="mRNA"/>
</dbReference>
<dbReference type="EMBL" id="AK153283">
    <property type="protein sequence ID" value="BAE31866.1"/>
    <property type="molecule type" value="mRNA"/>
</dbReference>
<dbReference type="CCDS" id="CCDS19821.1"/>
<dbReference type="RefSeq" id="NP_032520.1">
    <property type="nucleotide sequence ID" value="NM_008494.3"/>
</dbReference>
<dbReference type="SMR" id="O09010"/>
<dbReference type="FunCoup" id="O09010">
    <property type="interactions" value="408"/>
</dbReference>
<dbReference type="STRING" id="10090.ENSMUSP00000031555"/>
<dbReference type="CAZy" id="GT31">
    <property type="family name" value="Glycosyltransferase Family 31"/>
</dbReference>
<dbReference type="GlyCosmos" id="O09010">
    <property type="glycosylation" value="1 site, No reported glycans"/>
</dbReference>
<dbReference type="GlyGen" id="O09010">
    <property type="glycosylation" value="2 sites, 1 N-linked glycan (1 site)"/>
</dbReference>
<dbReference type="iPTMnet" id="O09010"/>
<dbReference type="PhosphoSitePlus" id="O09010"/>
<dbReference type="jPOST" id="O09010"/>
<dbReference type="PaxDb" id="10090-ENSMUSP00000031555"/>
<dbReference type="ProteomicsDB" id="265064"/>
<dbReference type="Antibodypedia" id="24378">
    <property type="antibodies" value="332 antibodies from 32 providers"/>
</dbReference>
<dbReference type="DNASU" id="16848"/>
<dbReference type="Ensembl" id="ENSMUST00000031555.3">
    <property type="protein sequence ID" value="ENSMUSP00000031555.2"/>
    <property type="gene ID" value="ENSMUSG00000029570.6"/>
</dbReference>
<dbReference type="GeneID" id="16848"/>
<dbReference type="KEGG" id="mmu:16848"/>
<dbReference type="UCSC" id="uc009ahu.1">
    <property type="organism name" value="mouse"/>
</dbReference>
<dbReference type="AGR" id="MGI:1095413"/>
<dbReference type="CTD" id="3955"/>
<dbReference type="MGI" id="MGI:1095413">
    <property type="gene designation" value="Lfng"/>
</dbReference>
<dbReference type="VEuPathDB" id="HostDB:ENSMUSG00000029570"/>
<dbReference type="eggNOG" id="ENOG502QV30">
    <property type="taxonomic scope" value="Eukaryota"/>
</dbReference>
<dbReference type="GeneTree" id="ENSGT00940000158717"/>
<dbReference type="HOGENOM" id="CLU_056611_0_1_1"/>
<dbReference type="InParanoid" id="O09010"/>
<dbReference type="OMA" id="CPHTAVF"/>
<dbReference type="OrthoDB" id="8959630at2759"/>
<dbReference type="PhylomeDB" id="O09010"/>
<dbReference type="TreeFam" id="TF324207"/>
<dbReference type="BRENDA" id="2.4.1.222">
    <property type="organism ID" value="3474"/>
</dbReference>
<dbReference type="BioGRID-ORCS" id="16848">
    <property type="hits" value="2 hits in 81 CRISPR screens"/>
</dbReference>
<dbReference type="PRO" id="PR:O09010"/>
<dbReference type="Proteomes" id="UP000000589">
    <property type="component" value="Chromosome 5"/>
</dbReference>
<dbReference type="RNAct" id="O09010">
    <property type="molecule type" value="protein"/>
</dbReference>
<dbReference type="Bgee" id="ENSMUSG00000029570">
    <property type="expression patterns" value="Expressed in embryonic post-anal tail and 232 other cell types or tissues"/>
</dbReference>
<dbReference type="ExpressionAtlas" id="O09010">
    <property type="expression patterns" value="baseline and differential"/>
</dbReference>
<dbReference type="GO" id="GO:0000139">
    <property type="term" value="C:Golgi membrane"/>
    <property type="evidence" value="ECO:0000304"/>
    <property type="project" value="Reactome"/>
</dbReference>
<dbReference type="GO" id="GO:0046872">
    <property type="term" value="F:metal ion binding"/>
    <property type="evidence" value="ECO:0007669"/>
    <property type="project" value="UniProtKB-KW"/>
</dbReference>
<dbReference type="GO" id="GO:0033829">
    <property type="term" value="F:O-fucosylpeptide 3-beta-N-acetylglucosaminyltransferase activity"/>
    <property type="evidence" value="ECO:0000314"/>
    <property type="project" value="UniProtKB"/>
</dbReference>
<dbReference type="GO" id="GO:0007386">
    <property type="term" value="P:compartment pattern specification"/>
    <property type="evidence" value="ECO:0000315"/>
    <property type="project" value="MGI"/>
</dbReference>
<dbReference type="GO" id="GO:0002315">
    <property type="term" value="P:marginal zone B cell differentiation"/>
    <property type="evidence" value="ECO:0000315"/>
    <property type="project" value="UniProtKB"/>
</dbReference>
<dbReference type="GO" id="GO:1902367">
    <property type="term" value="P:negative regulation of Notch signaling pathway involved in somitogenesis"/>
    <property type="evidence" value="ECO:0000315"/>
    <property type="project" value="UniProtKB"/>
</dbReference>
<dbReference type="GO" id="GO:0001541">
    <property type="term" value="P:ovarian follicle development"/>
    <property type="evidence" value="ECO:0000315"/>
    <property type="project" value="MGI"/>
</dbReference>
<dbReference type="GO" id="GO:0051446">
    <property type="term" value="P:positive regulation of meiotic cell cycle"/>
    <property type="evidence" value="ECO:0000315"/>
    <property type="project" value="MGI"/>
</dbReference>
<dbReference type="GO" id="GO:0045747">
    <property type="term" value="P:positive regulation of Notch signaling pathway"/>
    <property type="evidence" value="ECO:0000314"/>
    <property type="project" value="MGI"/>
</dbReference>
<dbReference type="GO" id="GO:0008593">
    <property type="term" value="P:regulation of Notch signaling pathway"/>
    <property type="evidence" value="ECO:0000314"/>
    <property type="project" value="UniProtKB"/>
</dbReference>
<dbReference type="GO" id="GO:0014807">
    <property type="term" value="P:regulation of somitogenesis"/>
    <property type="evidence" value="ECO:0000315"/>
    <property type="project" value="MGI"/>
</dbReference>
<dbReference type="GO" id="GO:0001756">
    <property type="term" value="P:somitogenesis"/>
    <property type="evidence" value="ECO:0000315"/>
    <property type="project" value="UniProtKB"/>
</dbReference>
<dbReference type="GO" id="GO:0030217">
    <property type="term" value="P:T cell differentiation"/>
    <property type="evidence" value="ECO:0000315"/>
    <property type="project" value="UniProtKB"/>
</dbReference>
<dbReference type="FunFam" id="3.90.550.50:FF:000003">
    <property type="entry name" value="Beta-1,3-N-acetylglucosaminyltransferase"/>
    <property type="match status" value="1"/>
</dbReference>
<dbReference type="Gene3D" id="3.90.550.50">
    <property type="match status" value="1"/>
</dbReference>
<dbReference type="InterPro" id="IPR017374">
    <property type="entry name" value="Fringe"/>
</dbReference>
<dbReference type="InterPro" id="IPR003378">
    <property type="entry name" value="Fringe-like_glycosylTrfase"/>
</dbReference>
<dbReference type="PANTHER" id="PTHR10811">
    <property type="entry name" value="FRINGE-RELATED"/>
    <property type="match status" value="1"/>
</dbReference>
<dbReference type="Pfam" id="PF02434">
    <property type="entry name" value="Fringe"/>
    <property type="match status" value="1"/>
</dbReference>
<dbReference type="PIRSF" id="PIRSF038073">
    <property type="entry name" value="B-acetylgalactosaminyltfrase"/>
    <property type="match status" value="1"/>
</dbReference>
<sequence>MLQRCGRRLLLALVGALLACLLVLTADPPPTPMPAERGRRALRSLAGSSGGAPASGSRAAVDPGVLTREVHSLSEYFSLLTRARRDADPPPGVASRQGDGHPRPPAEVLSPRDVFIAVKTTRKFHRARLDLLFETWISRHKEMTFIFTDGEDEALAKLTGNVVLTNCSSAHSRQALSCKMAVEYDRFIESGKKWFCHVDDDNYVNLRALLRLLASYPHTQDVYIGKPSLDRPIQATERISEHKVRPVHFWFATGGAGFCISRGLALKMGPWASGGHFMSTAERIRLPDDCTIGYIVEALLGVPLIRSGLFHSHLENLQQVPTTELHEQVTLSYGMFENKRNAVHIKGPFSVEADPSRFRSVHCHLYPDTPWCPRSAIF</sequence>
<accession>O09010</accession>
<accession>Q3U659</accession>
<accession>Q8K3F1</accession>
<accession>Q9DC10</accession>
<keyword id="KW-0217">Developmental protein</keyword>
<keyword id="KW-1015">Disulfide bond</keyword>
<keyword id="KW-0325">Glycoprotein</keyword>
<keyword id="KW-0328">Glycosyltransferase</keyword>
<keyword id="KW-0333">Golgi apparatus</keyword>
<keyword id="KW-0464">Manganese</keyword>
<keyword id="KW-0472">Membrane</keyword>
<keyword id="KW-0479">Metal-binding</keyword>
<keyword id="KW-1185">Reference proteome</keyword>
<keyword id="KW-0735">Signal-anchor</keyword>
<keyword id="KW-0808">Transferase</keyword>
<keyword id="KW-0812">Transmembrane</keyword>
<keyword id="KW-1133">Transmembrane helix</keyword>
<proteinExistence type="evidence at protein level"/>
<organism>
    <name type="scientific">Mus musculus</name>
    <name type="common">Mouse</name>
    <dbReference type="NCBI Taxonomy" id="10090"/>
    <lineage>
        <taxon>Eukaryota</taxon>
        <taxon>Metazoa</taxon>
        <taxon>Chordata</taxon>
        <taxon>Craniata</taxon>
        <taxon>Vertebrata</taxon>
        <taxon>Euteleostomi</taxon>
        <taxon>Mammalia</taxon>
        <taxon>Eutheria</taxon>
        <taxon>Euarchontoglires</taxon>
        <taxon>Glires</taxon>
        <taxon>Rodentia</taxon>
        <taxon>Myomorpha</taxon>
        <taxon>Muroidea</taxon>
        <taxon>Muridae</taxon>
        <taxon>Murinae</taxon>
        <taxon>Mus</taxon>
        <taxon>Mus</taxon>
    </lineage>
</organism>
<reference key="1">
    <citation type="journal article" date="1997" name="Development">
        <title>A family of mammalian Fringe genes implicated in boundary determination and the Notch pathway.</title>
        <authorList>
            <person name="Johnston S.H."/>
            <person name="Rauskolb C."/>
            <person name="Wilson R."/>
            <person name="Prabhakaran B."/>
            <person name="Irvine K.D."/>
            <person name="Vogt T.F."/>
        </authorList>
    </citation>
    <scope>NUCLEOTIDE SEQUENCE [MRNA]</scope>
</reference>
<reference key="2">
    <citation type="journal article" date="1997" name="Nat. Genet.">
        <title>Fringe boundaries coincide with Notch-dependent patterning centres in mammals and alter Notch-dependent development in Drosophila.</title>
        <authorList>
            <person name="Cohen B."/>
            <person name="Bashirullah A."/>
            <person name="Dagnino L."/>
            <person name="Campbell C."/>
            <person name="Fisher W.W."/>
            <person name="Leow C.C."/>
            <person name="Whiting E."/>
            <person name="Ryan D."/>
            <person name="Zinyk D."/>
            <person name="Boulianne G."/>
            <person name="Hui C.-C."/>
            <person name="Gallie B."/>
            <person name="Phillips R.A."/>
            <person name="Lipshitz H.D."/>
            <person name="Egan S.E."/>
        </authorList>
    </citation>
    <scope>NUCLEOTIDE SEQUENCE [MRNA]</scope>
</reference>
<reference key="3">
    <citation type="journal article" date="2002" name="Dev. Cell">
        <title>Clock regulatory elements control cyclic expression of Lunatic fringe during somitogenesis.</title>
        <authorList>
            <person name="Cole S.E."/>
            <person name="Levorse J.M."/>
            <person name="Tilghman S.M."/>
            <person name="Vogt T.F."/>
        </authorList>
    </citation>
    <scope>NUCLEOTIDE SEQUENCE OF 1-143</scope>
    <scope>DEVELOPMENTAL STAGE</scope>
    <source>
        <strain>129S6/SvEvTac</strain>
    </source>
</reference>
<reference key="4">
    <citation type="journal article" date="2005" name="Science">
        <title>The transcriptional landscape of the mammalian genome.</title>
        <authorList>
            <person name="Carninci P."/>
            <person name="Kasukawa T."/>
            <person name="Katayama S."/>
            <person name="Gough J."/>
            <person name="Frith M.C."/>
            <person name="Maeda N."/>
            <person name="Oyama R."/>
            <person name="Ravasi T."/>
            <person name="Lenhard B."/>
            <person name="Wells C."/>
            <person name="Kodzius R."/>
            <person name="Shimokawa K."/>
            <person name="Bajic V.B."/>
            <person name="Brenner S.E."/>
            <person name="Batalov S."/>
            <person name="Forrest A.R."/>
            <person name="Zavolan M."/>
            <person name="Davis M.J."/>
            <person name="Wilming L.G."/>
            <person name="Aidinis V."/>
            <person name="Allen J.E."/>
            <person name="Ambesi-Impiombato A."/>
            <person name="Apweiler R."/>
            <person name="Aturaliya R.N."/>
            <person name="Bailey T.L."/>
            <person name="Bansal M."/>
            <person name="Baxter L."/>
            <person name="Beisel K.W."/>
            <person name="Bersano T."/>
            <person name="Bono H."/>
            <person name="Chalk A.M."/>
            <person name="Chiu K.P."/>
            <person name="Choudhary V."/>
            <person name="Christoffels A."/>
            <person name="Clutterbuck D.R."/>
            <person name="Crowe M.L."/>
            <person name="Dalla E."/>
            <person name="Dalrymple B.P."/>
            <person name="de Bono B."/>
            <person name="Della Gatta G."/>
            <person name="di Bernardo D."/>
            <person name="Down T."/>
            <person name="Engstrom P."/>
            <person name="Fagiolini M."/>
            <person name="Faulkner G."/>
            <person name="Fletcher C.F."/>
            <person name="Fukushima T."/>
            <person name="Furuno M."/>
            <person name="Futaki S."/>
            <person name="Gariboldi M."/>
            <person name="Georgii-Hemming P."/>
            <person name="Gingeras T.R."/>
            <person name="Gojobori T."/>
            <person name="Green R.E."/>
            <person name="Gustincich S."/>
            <person name="Harbers M."/>
            <person name="Hayashi Y."/>
            <person name="Hensch T.K."/>
            <person name="Hirokawa N."/>
            <person name="Hill D."/>
            <person name="Huminiecki L."/>
            <person name="Iacono M."/>
            <person name="Ikeo K."/>
            <person name="Iwama A."/>
            <person name="Ishikawa T."/>
            <person name="Jakt M."/>
            <person name="Kanapin A."/>
            <person name="Katoh M."/>
            <person name="Kawasawa Y."/>
            <person name="Kelso J."/>
            <person name="Kitamura H."/>
            <person name="Kitano H."/>
            <person name="Kollias G."/>
            <person name="Krishnan S.P."/>
            <person name="Kruger A."/>
            <person name="Kummerfeld S.K."/>
            <person name="Kurochkin I.V."/>
            <person name="Lareau L.F."/>
            <person name="Lazarevic D."/>
            <person name="Lipovich L."/>
            <person name="Liu J."/>
            <person name="Liuni S."/>
            <person name="McWilliam S."/>
            <person name="Madan Babu M."/>
            <person name="Madera M."/>
            <person name="Marchionni L."/>
            <person name="Matsuda H."/>
            <person name="Matsuzawa S."/>
            <person name="Miki H."/>
            <person name="Mignone F."/>
            <person name="Miyake S."/>
            <person name="Morris K."/>
            <person name="Mottagui-Tabar S."/>
            <person name="Mulder N."/>
            <person name="Nakano N."/>
            <person name="Nakauchi H."/>
            <person name="Ng P."/>
            <person name="Nilsson R."/>
            <person name="Nishiguchi S."/>
            <person name="Nishikawa S."/>
            <person name="Nori F."/>
            <person name="Ohara O."/>
            <person name="Okazaki Y."/>
            <person name="Orlando V."/>
            <person name="Pang K.C."/>
            <person name="Pavan W.J."/>
            <person name="Pavesi G."/>
            <person name="Pesole G."/>
            <person name="Petrovsky N."/>
            <person name="Piazza S."/>
            <person name="Reed J."/>
            <person name="Reid J.F."/>
            <person name="Ring B.Z."/>
            <person name="Ringwald M."/>
            <person name="Rost B."/>
            <person name="Ruan Y."/>
            <person name="Salzberg S.L."/>
            <person name="Sandelin A."/>
            <person name="Schneider C."/>
            <person name="Schoenbach C."/>
            <person name="Sekiguchi K."/>
            <person name="Semple C.A."/>
            <person name="Seno S."/>
            <person name="Sessa L."/>
            <person name="Sheng Y."/>
            <person name="Shibata Y."/>
            <person name="Shimada H."/>
            <person name="Shimada K."/>
            <person name="Silva D."/>
            <person name="Sinclair B."/>
            <person name="Sperling S."/>
            <person name="Stupka E."/>
            <person name="Sugiura K."/>
            <person name="Sultana R."/>
            <person name="Takenaka Y."/>
            <person name="Taki K."/>
            <person name="Tammoja K."/>
            <person name="Tan S.L."/>
            <person name="Tang S."/>
            <person name="Taylor M.S."/>
            <person name="Tegner J."/>
            <person name="Teichmann S.A."/>
            <person name="Ueda H.R."/>
            <person name="van Nimwegen E."/>
            <person name="Verardo R."/>
            <person name="Wei C.L."/>
            <person name="Yagi K."/>
            <person name="Yamanishi H."/>
            <person name="Zabarovsky E."/>
            <person name="Zhu S."/>
            <person name="Zimmer A."/>
            <person name="Hide W."/>
            <person name="Bult C."/>
            <person name="Grimmond S.M."/>
            <person name="Teasdale R.D."/>
            <person name="Liu E.T."/>
            <person name="Brusic V."/>
            <person name="Quackenbush J."/>
            <person name="Wahlestedt C."/>
            <person name="Mattick J.S."/>
            <person name="Hume D.A."/>
            <person name="Kai C."/>
            <person name="Sasaki D."/>
            <person name="Tomaru Y."/>
            <person name="Fukuda S."/>
            <person name="Kanamori-Katayama M."/>
            <person name="Suzuki M."/>
            <person name="Aoki J."/>
            <person name="Arakawa T."/>
            <person name="Iida J."/>
            <person name="Imamura K."/>
            <person name="Itoh M."/>
            <person name="Kato T."/>
            <person name="Kawaji H."/>
            <person name="Kawagashira N."/>
            <person name="Kawashima T."/>
            <person name="Kojima M."/>
            <person name="Kondo S."/>
            <person name="Konno H."/>
            <person name="Nakano K."/>
            <person name="Ninomiya N."/>
            <person name="Nishio T."/>
            <person name="Okada M."/>
            <person name="Plessy C."/>
            <person name="Shibata K."/>
            <person name="Shiraki T."/>
            <person name="Suzuki S."/>
            <person name="Tagami M."/>
            <person name="Waki K."/>
            <person name="Watahiki A."/>
            <person name="Okamura-Oho Y."/>
            <person name="Suzuki H."/>
            <person name="Kawai J."/>
            <person name="Hayashizaki Y."/>
        </authorList>
    </citation>
    <scope>NUCLEOTIDE SEQUENCE [LARGE SCALE MRNA]</scope>
    <source>
        <strain>C57BL/6J</strain>
        <tissue>Bone marrow</tissue>
        <tissue>Lung</tissue>
    </source>
</reference>
<reference key="5">
    <citation type="journal article" date="1999" name="Curr. Biol.">
        <title>Interaction between Notch signalling and Lunatic fringe during somite boundary formation in the mouse.</title>
        <authorList>
            <person name="del Barco Barrantes I."/>
            <person name="Elia A.J."/>
            <person name="Wuensch K."/>
            <person name="De Angelis M.H."/>
            <person name="Mak T.W."/>
            <person name="Rossant J."/>
            <person name="Conlon R.A."/>
            <person name="Gossler A."/>
            <person name="de la Pompa J.L."/>
        </authorList>
    </citation>
    <scope>FUNCTION</scope>
</reference>
<reference key="6">
    <citation type="journal article" date="2000" name="Nature">
        <title>Fringe is a glycosyltransferase that modifies Notch.</title>
        <authorList>
            <person name="Moloney D.J."/>
            <person name="Panin V.M."/>
            <person name="Johnston S.H."/>
            <person name="Chen J."/>
            <person name="Shao L."/>
            <person name="Wilson R."/>
            <person name="Wang Y."/>
            <person name="Stanley P."/>
            <person name="Irvine K.D."/>
            <person name="Haltiwanger R.S."/>
            <person name="Vogt T.F."/>
        </authorList>
    </citation>
    <scope>FUNCTION</scope>
    <scope>CATALYTIC ACTIVITY</scope>
</reference>
<reference key="7">
    <citation type="journal article" date="2002" name="Dev. Biol.">
        <title>Lunatic fringe, FGF, and BMP regulate the Notch pathway during epithelial morphogenesis of teeth.</title>
        <authorList>
            <person name="Mustonen T."/>
            <person name="Tuemmers M."/>
            <person name="Mikami T."/>
            <person name="Itoh N."/>
            <person name="Zhang N."/>
            <person name="Gridley T."/>
            <person name="Thesleff I."/>
        </authorList>
    </citation>
    <scope>FUNCTION</scope>
</reference>
<reference key="8">
    <citation type="journal article" date="1998" name="Nature">
        <title>Lunatic fringe is an essential mediator of somite segmentation and patterning.</title>
        <authorList>
            <person name="Evrard Y.A."/>
            <person name="Lun Y."/>
            <person name="Aulehla A."/>
            <person name="Gan L."/>
            <person name="Johnson R.L."/>
        </authorList>
    </citation>
    <scope>DEVELOPMENTAL STAGE</scope>
</reference>
<reference key="9">
    <citation type="journal article" date="1999" name="Mamm. Genome">
        <title>Genomic structure, mapping, and expression analysis of the mammalian Lunatic, Manic, and Radical fringe genes.</title>
        <authorList>
            <person name="Moran J.L."/>
            <person name="Johnston S.H."/>
            <person name="Rauskolb C."/>
            <person name="Bhalerao J."/>
            <person name="Bowcock A.M."/>
            <person name="Vogt T.F."/>
        </authorList>
    </citation>
    <scope>DEVELOPMENTAL STAGE</scope>
</reference>
<reference key="10">
    <citation type="journal article" date="2001" name="Immunity">
        <title>Subversion of the T/B lineage decision in the thymus by lunatic fringe-mediated inhibition of Notch-1.</title>
        <authorList>
            <person name="Koch U."/>
            <person name="Lacombe T.A."/>
            <person name="Holland D."/>
            <person name="Bowman J.L."/>
            <person name="Cohen B.L."/>
            <person name="Egan S.E."/>
            <person name="Guidos C.J."/>
        </authorList>
    </citation>
    <scope>FUNCTION</scope>
</reference>
<reference key="11">
    <citation type="journal article" date="2002" name="Dev. Cell">
        <title>Periodic Lunatic fringe expression is controlled during segmentation by a cyclic transcriptional enhancer responsive to notch signaling.</title>
        <authorList>
            <person name="Morales A.V."/>
            <person name="Yasuda Y."/>
            <person name="Ish-Horowicz D."/>
        </authorList>
    </citation>
    <scope>DEVELOPMENTAL STAGE</scope>
</reference>
<reference key="12">
    <citation type="journal article" date="2005" name="J. Biol. Chem.">
        <title>Lunatic fringe, manic fringe, and radical fringe recognize similar specificity determinants in O-fucosylated epidermal growth factor-like repeats.</title>
        <authorList>
            <person name="Rampal R."/>
            <person name="Li A.S."/>
            <person name="Moloney D.J."/>
            <person name="Georgiou S.A."/>
            <person name="Luther K.B."/>
            <person name="Nita-Lazar A."/>
            <person name="Haltiwanger R.S."/>
        </authorList>
    </citation>
    <scope>CATALYTIC ACTIVITY</scope>
    <scope>COFACTOR</scope>
    <scope>BIOPHYSICOCHEMICAL PROPERTIES</scope>
</reference>
<reference key="13">
    <citation type="journal article" date="2006" name="Am. J. Hum. Genet.">
        <title>Mutation of the LUNATIC FRINGE gene in humans causes spondylocostal dysostosis with a severe vertebral phenotype.</title>
        <authorList>
            <person name="Sparrow D.B."/>
            <person name="Chapman G."/>
            <person name="Wouters M.A."/>
            <person name="Whittock N.V."/>
            <person name="Ellard S."/>
            <person name="Fatkin D."/>
            <person name="Turnpenny P.D."/>
            <person name="Kusumi K."/>
            <person name="Sillence D."/>
            <person name="Dunwoodie S.L."/>
        </authorList>
    </citation>
    <scope>FUNCTION</scope>
    <scope>SUBCELLULAR LOCATION</scope>
    <scope>CATALYTIC ACTIVITY</scope>
    <scope>MUTAGENESIS OF PHE-187 AND ASP-201</scope>
</reference>
<reference key="14">
    <citation type="journal article" date="2017" name="Dev. Cell">
        <title>Deciphering the fringe-mediated notch code: identification of activating and inhibiting sites allowing discrimination between ligands.</title>
        <authorList>
            <person name="Kakuda S."/>
            <person name="Haltiwanger R.S."/>
        </authorList>
    </citation>
    <scope>FUNCTION</scope>
    <scope>INTERACTION WITH NOTCH1</scope>
</reference>
<gene>
    <name evidence="17" type="primary">Lfng</name>
</gene>
<name>LFNG_MOUSE</name>
<comment type="function">
    <text evidence="2 5 7 8 11 13 14">Glycosyltransferase that initiates the elongation of O-linked fucose residues attached to EGF-like repeats in the extracellular domain of Notch molecules (PubMed:10935626). Modulates NOTCH1 activity by modifying O-fucose residues at specific EGF-like domains resulting in inhibition of NOTCH1 activation by JAG1 and enhancement of NOTCH1 activation by DLL1 via an increase in its binding to DLL1 (PubMed:16385447, PubMed:28089369). Decreases the binding of JAG1 to NOTCH2 but not that of DLL1 (By similarity). Essential mediator of somite segmentation and patterning. During somite boundary formation, it restricts Notch activity in the presomitic mesoderm to a boundary-forming territory in the posterior half of the prospective somite. In this region, Notch function activates a set of genes that are involved in boundary formation and in anterior-posterior somite identity (PubMed:10330372). Ectopically expressed in the thymus, Lfgn inhibits Notch signaling which results in inhibition of T-cell commitment and promotes B-cell development in lymphoid progenitors (PubMed:11520458). May play a role in boundary formation of the enamel knot (PubMed:12167404).</text>
</comment>
<comment type="catalytic activity">
    <reaction evidence="7 12">
        <text>3-O-(alpha-L-fucosyl)-L-threonyl-[EGF-like domain protein] + UDP-N-acetyl-alpha-D-glucosamine = 3-O-(N-acetyl-beta-D-glucosaminyl-(1-&gt;3)-alpha-L-fucosyl)-L-threonyl-[EGF-like domain protein] + UDP + H(+)</text>
        <dbReference type="Rhea" id="RHEA:70531"/>
        <dbReference type="Rhea" id="RHEA-COMP:17922"/>
        <dbReference type="Rhea" id="RHEA-COMP:17923"/>
        <dbReference type="ChEBI" id="CHEBI:15378"/>
        <dbReference type="ChEBI" id="CHEBI:57705"/>
        <dbReference type="ChEBI" id="CHEBI:58223"/>
        <dbReference type="ChEBI" id="CHEBI:189631"/>
        <dbReference type="ChEBI" id="CHEBI:189634"/>
        <dbReference type="EC" id="2.4.1.222"/>
    </reaction>
</comment>
<comment type="catalytic activity">
    <reaction evidence="7 12">
        <text>3-O-(alpha-L-fucosyl)-L-seryl-[EGF-like domain protein] + UDP-N-acetyl-alpha-D-glucosamine = 3-O-(N-acetyl-beta-D-glucosaminyl-(1-&gt;3)-alpha-L-fucosyl)-L-seryl-[EGF-like domain protein] + UDP + H(+)</text>
        <dbReference type="Rhea" id="RHEA:70511"/>
        <dbReference type="Rhea" id="RHEA-COMP:17919"/>
        <dbReference type="Rhea" id="RHEA-COMP:17920"/>
        <dbReference type="ChEBI" id="CHEBI:15378"/>
        <dbReference type="ChEBI" id="CHEBI:57705"/>
        <dbReference type="ChEBI" id="CHEBI:58223"/>
        <dbReference type="ChEBI" id="CHEBI:189632"/>
        <dbReference type="ChEBI" id="CHEBI:189633"/>
        <dbReference type="EC" id="2.4.1.222"/>
    </reaction>
</comment>
<comment type="cofactor">
    <cofactor evidence="12">
        <name>Mn(2+)</name>
        <dbReference type="ChEBI" id="CHEBI:29035"/>
    </cofactor>
    <cofactor evidence="12">
        <name>Co(2+)</name>
        <dbReference type="ChEBI" id="CHEBI:48828"/>
    </cofactor>
    <text evidence="12">Manganese is the most effective. Can also use cobalt with lower efficiency. Has some activity with magnesium and calcium, but not zinc.</text>
</comment>
<comment type="biophysicochemical properties">
    <kinetics>
        <KM evidence="12">78 uM for UDP-N-acetyl-alpha-D-glucosamine</KM>
        <Vmax evidence="12">20.0 nmol/min/mg enzyme</Vmax>
    </kinetics>
    <phDependence>
        <text evidence="12">Optimum pH is 5.</text>
    </phDependence>
    <temperatureDependence>
        <text evidence="12">Optimum temperature is 37 degrees Celsius.</text>
    </temperatureDependence>
</comment>
<comment type="subcellular location">
    <subcellularLocation>
        <location evidence="13">Golgi apparatus</location>
    </subcellularLocation>
    <subcellularLocation>
        <location evidence="16">Golgi apparatus membrane</location>
        <topology evidence="16">Single-pass type II membrane protein</topology>
    </subcellularLocation>
</comment>
<comment type="tissue specificity">
    <text>Detected at 12.5 dpc in all tissues examined with the highest level observed in adult brain and spleen. Detected in the dental epithelium.</text>
</comment>
<comment type="developmental stage">
    <text evidence="6 9 10 15">Developmental protein. During segmentation it shows a cyclic transcription pattern which is under the control of Notch. Expressed in the caudal region of the presomitic mesoderm with each cycle corresponding to the formation time of one somite. In the dental epithelium it is detected at stage 13.5 dpc. The pattern of expression corresponds exactly to the formation of the enamel knot between late bud and early cap stages.</text>
</comment>
<comment type="PTM">
    <text>A soluble form may be derived from the membrane form by proteolytic processing.</text>
</comment>
<comment type="similarity">
    <text evidence="16">Belongs to the glycosyltransferase 31 family.</text>
</comment>
<comment type="online information" name="Functional Glycomics Gateway - GTase">
    <link uri="http://www.functionalglycomics.org/glycomics/molecule/jsp/glycoEnzyme/viewGlycoEnzyme.jsp?gbpId=gt_mou_590"/>
    <text>lunatic fringe gene homolog (lfng)</text>
</comment>
<protein>
    <recommendedName>
        <fullName evidence="16">Beta-1,3-N-acetylglucosaminyltransferase lunatic fringe</fullName>
        <ecNumber evidence="7 12">2.4.1.222</ecNumber>
    </recommendedName>
    <alternativeName>
        <fullName>O-fucosylpeptide 3-beta-N-acetylglucosaminyltransferase</fullName>
    </alternativeName>
</protein>
<feature type="chain" id="PRO_0000219177" description="Beta-1,3-N-acetylglucosaminyltransferase lunatic fringe">
    <location>
        <begin position="1"/>
        <end position="378"/>
    </location>
</feature>
<feature type="topological domain" description="Cytoplasmic" evidence="3">
    <location>
        <begin position="1"/>
        <end position="8"/>
    </location>
</feature>
<feature type="transmembrane region" description="Helical; Signal-anchor for type II membrane protein" evidence="3">
    <location>
        <begin position="9"/>
        <end position="29"/>
    </location>
</feature>
<feature type="topological domain" description="Lumenal" evidence="3">
    <location>
        <begin position="30"/>
        <end position="378"/>
    </location>
</feature>
<feature type="region of interest" description="Disordered" evidence="4">
    <location>
        <begin position="85"/>
        <end position="108"/>
    </location>
</feature>
<feature type="active site" evidence="1">
    <location>
        <position position="289"/>
    </location>
</feature>
<feature type="binding site" evidence="1">
    <location>
        <position position="128"/>
    </location>
    <ligand>
        <name>substrate</name>
    </ligand>
</feature>
<feature type="binding site" evidence="1">
    <location>
        <position position="200"/>
    </location>
    <ligand>
        <name>substrate</name>
    </ligand>
</feature>
<feature type="binding site" evidence="1">
    <location>
        <position position="201"/>
    </location>
    <ligand>
        <name>Mn(2+)</name>
        <dbReference type="ChEBI" id="CHEBI:29035"/>
    </ligand>
</feature>
<feature type="binding site" evidence="1">
    <location>
        <position position="313"/>
    </location>
    <ligand>
        <name>Mn(2+)</name>
        <dbReference type="ChEBI" id="CHEBI:29035"/>
    </ligand>
</feature>
<feature type="site" description="Cleavage; by furin-like protease" evidence="3">
    <location>
        <begin position="85"/>
        <end position="86"/>
    </location>
</feature>
<feature type="glycosylation site" description="N-linked (GlcNAc...) asparagine" evidence="3">
    <location>
        <position position="166"/>
    </location>
</feature>
<feature type="disulfide bond" evidence="1">
    <location>
        <begin position="167"/>
        <end position="178"/>
    </location>
</feature>
<feature type="disulfide bond" evidence="1">
    <location>
        <begin position="196"/>
        <end position="259"/>
    </location>
</feature>
<feature type="disulfide bond" evidence="1">
    <location>
        <begin position="363"/>
        <end position="372"/>
    </location>
</feature>
<feature type="mutagenesis site" description="Unable to modulate Notch signaling in a cell-based assay. Loss of acetylglucosaminyltransferase activity. Does not localize to Golgi apparatus. No effect on protein expression." evidence="13">
    <original>F</original>
    <variation>L</variation>
    <location>
        <position position="187"/>
    </location>
</feature>
<feature type="mutagenesis site" description="Unable to modulate Notch signaling in a cell-based assay. Loss of acetylglucosaminyltransferase activity. Does not affect localization to Golgi apparatus. No effect on protein expression." evidence="13">
    <original>D</original>
    <variation>A</variation>
    <location>
        <position position="201"/>
    </location>
</feature>
<feature type="sequence conflict" description="In Ref. 4; AK004642." evidence="16" ref="4">
    <original>V</original>
    <variation>M</variation>
    <location>
        <position position="343"/>
    </location>
</feature>
<feature type="sequence conflict" description="In Ref. 4; AK004642." evidence="16" ref="4">
    <original>V</original>
    <variation>I</variation>
    <location>
        <position position="361"/>
    </location>
</feature>
<evidence type="ECO:0000250" key="1"/>
<evidence type="ECO:0000250" key="2">
    <source>
        <dbReference type="UniProtKB" id="Q8NES3"/>
    </source>
</evidence>
<evidence type="ECO:0000255" key="3"/>
<evidence type="ECO:0000256" key="4">
    <source>
        <dbReference type="SAM" id="MobiDB-lite"/>
    </source>
</evidence>
<evidence type="ECO:0000269" key="5">
    <source>
    </source>
</evidence>
<evidence type="ECO:0000269" key="6">
    <source>
    </source>
</evidence>
<evidence type="ECO:0000269" key="7">
    <source>
    </source>
</evidence>
<evidence type="ECO:0000269" key="8">
    <source>
    </source>
</evidence>
<evidence type="ECO:0000269" key="9">
    <source>
    </source>
</evidence>
<evidence type="ECO:0000269" key="10">
    <source>
    </source>
</evidence>
<evidence type="ECO:0000269" key="11">
    <source>
    </source>
</evidence>
<evidence type="ECO:0000269" key="12">
    <source>
    </source>
</evidence>
<evidence type="ECO:0000269" key="13">
    <source>
    </source>
</evidence>
<evidence type="ECO:0000269" key="14">
    <source>
    </source>
</evidence>
<evidence type="ECO:0000269" key="15">
    <source>
    </source>
</evidence>
<evidence type="ECO:0000305" key="16"/>
<evidence type="ECO:0000312" key="17">
    <source>
        <dbReference type="MGI" id="MGI:1095413"/>
    </source>
</evidence>